<sequence>MAEQTLSFVDCLMSRFPTVRVSVAQPRGEISLDVPVVEWCAVCKALRDEFDFEQLSDLCGVDYLGYGNAEWDTTDVSAQGFSRGVAGKAVGRFAWGEFPSAGSNDGTQPWDVPQERFAVLAHLISYRHNRRLRVRCFASNDALPIVASLTDVWPGVNWFEREAFDLFGIVFEGHPDLRRILTDYGFIGHPFRKDFPLTGNVEVRYDEEKKRVVYVPVTSVEPRVSVPRVIRDDPRFGAAAGESTHSETVK</sequence>
<protein>
    <recommendedName>
        <fullName evidence="1">NADH-quinone oxidoreductase subunit C</fullName>
        <ecNumber evidence="1">7.1.1.-</ecNumber>
    </recommendedName>
    <alternativeName>
        <fullName evidence="1">NADH dehydrogenase I subunit C</fullName>
    </alternativeName>
    <alternativeName>
        <fullName evidence="1">NDH-1 subunit C</fullName>
    </alternativeName>
</protein>
<keyword id="KW-0997">Cell inner membrane</keyword>
<keyword id="KW-1003">Cell membrane</keyword>
<keyword id="KW-0472">Membrane</keyword>
<keyword id="KW-0520">NAD</keyword>
<keyword id="KW-0874">Quinone</keyword>
<keyword id="KW-1185">Reference proteome</keyword>
<keyword id="KW-1278">Translocase</keyword>
<keyword id="KW-0813">Transport</keyword>
<keyword id="KW-0830">Ubiquinone</keyword>
<name>NUOC_XYLFT</name>
<evidence type="ECO:0000255" key="1">
    <source>
        <dbReference type="HAMAP-Rule" id="MF_01357"/>
    </source>
</evidence>
<gene>
    <name evidence="1" type="primary">nuoC</name>
    <name type="ordered locus">PD_0250</name>
</gene>
<organism>
    <name type="scientific">Xylella fastidiosa (strain Temecula1 / ATCC 700964)</name>
    <dbReference type="NCBI Taxonomy" id="183190"/>
    <lineage>
        <taxon>Bacteria</taxon>
        <taxon>Pseudomonadati</taxon>
        <taxon>Pseudomonadota</taxon>
        <taxon>Gammaproteobacteria</taxon>
        <taxon>Lysobacterales</taxon>
        <taxon>Lysobacteraceae</taxon>
        <taxon>Xylella</taxon>
    </lineage>
</organism>
<dbReference type="EC" id="7.1.1.-" evidence="1"/>
<dbReference type="EMBL" id="AE009442">
    <property type="protein sequence ID" value="AAO28136.1"/>
    <property type="molecule type" value="Genomic_DNA"/>
</dbReference>
<dbReference type="RefSeq" id="WP_004087936.1">
    <property type="nucleotide sequence ID" value="NC_004556.1"/>
</dbReference>
<dbReference type="SMR" id="Q87EQ3"/>
<dbReference type="KEGG" id="xft:PD_0250"/>
<dbReference type="HOGENOM" id="CLU_042628_2_1_6"/>
<dbReference type="Proteomes" id="UP000002516">
    <property type="component" value="Chromosome"/>
</dbReference>
<dbReference type="GO" id="GO:0005886">
    <property type="term" value="C:plasma membrane"/>
    <property type="evidence" value="ECO:0007669"/>
    <property type="project" value="UniProtKB-SubCell"/>
</dbReference>
<dbReference type="GO" id="GO:0008137">
    <property type="term" value="F:NADH dehydrogenase (ubiquinone) activity"/>
    <property type="evidence" value="ECO:0007669"/>
    <property type="project" value="InterPro"/>
</dbReference>
<dbReference type="GO" id="GO:0050136">
    <property type="term" value="F:NADH:ubiquinone reductase (non-electrogenic) activity"/>
    <property type="evidence" value="ECO:0007669"/>
    <property type="project" value="UniProtKB-UniRule"/>
</dbReference>
<dbReference type="GO" id="GO:0048038">
    <property type="term" value="F:quinone binding"/>
    <property type="evidence" value="ECO:0007669"/>
    <property type="project" value="UniProtKB-KW"/>
</dbReference>
<dbReference type="Gene3D" id="3.30.460.80">
    <property type="entry name" value="NADH:ubiquinone oxidoreductase, 30kDa subunit"/>
    <property type="match status" value="1"/>
</dbReference>
<dbReference type="HAMAP" id="MF_01357">
    <property type="entry name" value="NDH1_NuoC"/>
    <property type="match status" value="1"/>
</dbReference>
<dbReference type="InterPro" id="IPR010218">
    <property type="entry name" value="NADH_DH_suC"/>
</dbReference>
<dbReference type="InterPro" id="IPR037232">
    <property type="entry name" value="NADH_quin_OxRdtase_su_C/D-like"/>
</dbReference>
<dbReference type="InterPro" id="IPR001268">
    <property type="entry name" value="NADH_UbQ_OxRdtase_30kDa_su"/>
</dbReference>
<dbReference type="InterPro" id="IPR020396">
    <property type="entry name" value="NADH_UbQ_OxRdtase_CS"/>
</dbReference>
<dbReference type="NCBIfam" id="NF004730">
    <property type="entry name" value="PRK06074.1-1"/>
    <property type="match status" value="1"/>
</dbReference>
<dbReference type="NCBIfam" id="NF004732">
    <property type="entry name" value="PRK06074.1-4"/>
    <property type="match status" value="1"/>
</dbReference>
<dbReference type="PANTHER" id="PTHR10884:SF14">
    <property type="entry name" value="NADH DEHYDROGENASE [UBIQUINONE] IRON-SULFUR PROTEIN 3, MITOCHONDRIAL"/>
    <property type="match status" value="1"/>
</dbReference>
<dbReference type="PANTHER" id="PTHR10884">
    <property type="entry name" value="NADH DEHYDROGENASE UBIQUINONE IRON-SULFUR PROTEIN 3"/>
    <property type="match status" value="1"/>
</dbReference>
<dbReference type="Pfam" id="PF00329">
    <property type="entry name" value="Complex1_30kDa"/>
    <property type="match status" value="1"/>
</dbReference>
<dbReference type="SUPFAM" id="SSF143243">
    <property type="entry name" value="Nqo5-like"/>
    <property type="match status" value="1"/>
</dbReference>
<dbReference type="PROSITE" id="PS00542">
    <property type="entry name" value="COMPLEX1_30K"/>
    <property type="match status" value="1"/>
</dbReference>
<feature type="chain" id="PRO_0000358234" description="NADH-quinone oxidoreductase subunit C">
    <location>
        <begin position="1"/>
        <end position="250"/>
    </location>
</feature>
<proteinExistence type="inferred from homology"/>
<accession>Q87EQ3</accession>
<reference key="1">
    <citation type="journal article" date="2003" name="J. Bacteriol.">
        <title>Comparative analyses of the complete genome sequences of Pierce's disease and citrus variegated chlorosis strains of Xylella fastidiosa.</title>
        <authorList>
            <person name="Van Sluys M.A."/>
            <person name="de Oliveira M.C."/>
            <person name="Monteiro-Vitorello C.B."/>
            <person name="Miyaki C.Y."/>
            <person name="Furlan L.R."/>
            <person name="Camargo L.E.A."/>
            <person name="da Silva A.C.R."/>
            <person name="Moon D.H."/>
            <person name="Takita M.A."/>
            <person name="Lemos E.G.M."/>
            <person name="Machado M.A."/>
            <person name="Ferro M.I.T."/>
            <person name="da Silva F.R."/>
            <person name="Goldman M.H.S."/>
            <person name="Goldman G.H."/>
            <person name="Lemos M.V.F."/>
            <person name="El-Dorry H."/>
            <person name="Tsai S.M."/>
            <person name="Carrer H."/>
            <person name="Carraro D.M."/>
            <person name="de Oliveira R.C."/>
            <person name="Nunes L.R."/>
            <person name="Siqueira W.J."/>
            <person name="Coutinho L.L."/>
            <person name="Kimura E.T."/>
            <person name="Ferro E.S."/>
            <person name="Harakava R."/>
            <person name="Kuramae E.E."/>
            <person name="Marino C.L."/>
            <person name="Giglioti E."/>
            <person name="Abreu I.L."/>
            <person name="Alves L.M.C."/>
            <person name="do Amaral A.M."/>
            <person name="Baia G.S."/>
            <person name="Blanco S.R."/>
            <person name="Brito M.S."/>
            <person name="Cannavan F.S."/>
            <person name="Celestino A.V."/>
            <person name="da Cunha A.F."/>
            <person name="Fenille R.C."/>
            <person name="Ferro J.A."/>
            <person name="Formighieri E.F."/>
            <person name="Kishi L.T."/>
            <person name="Leoni S.G."/>
            <person name="Oliveira A.R."/>
            <person name="Rosa V.E. Jr."/>
            <person name="Sassaki F.T."/>
            <person name="Sena J.A.D."/>
            <person name="de Souza A.A."/>
            <person name="Truffi D."/>
            <person name="Tsukumo F."/>
            <person name="Yanai G.M."/>
            <person name="Zaros L.G."/>
            <person name="Civerolo E.L."/>
            <person name="Simpson A.J.G."/>
            <person name="Almeida N.F. Jr."/>
            <person name="Setubal J.C."/>
            <person name="Kitajima J.P."/>
        </authorList>
    </citation>
    <scope>NUCLEOTIDE SEQUENCE [LARGE SCALE GENOMIC DNA]</scope>
    <source>
        <strain>Temecula1 / ATCC 700964</strain>
    </source>
</reference>
<comment type="function">
    <text evidence="1">NDH-1 shuttles electrons from NADH, via FMN and iron-sulfur (Fe-S) centers, to quinones in the respiratory chain. The immediate electron acceptor for the enzyme in this species is believed to be ubiquinone. Couples the redox reaction to proton translocation (for every two electrons transferred, four hydrogen ions are translocated across the cytoplasmic membrane), and thus conserves the redox energy in a proton gradient.</text>
</comment>
<comment type="catalytic activity">
    <reaction evidence="1">
        <text>a quinone + NADH + 5 H(+)(in) = a quinol + NAD(+) + 4 H(+)(out)</text>
        <dbReference type="Rhea" id="RHEA:57888"/>
        <dbReference type="ChEBI" id="CHEBI:15378"/>
        <dbReference type="ChEBI" id="CHEBI:24646"/>
        <dbReference type="ChEBI" id="CHEBI:57540"/>
        <dbReference type="ChEBI" id="CHEBI:57945"/>
        <dbReference type="ChEBI" id="CHEBI:132124"/>
    </reaction>
</comment>
<comment type="subunit">
    <text evidence="1">NDH-1 is composed of 14 different subunits. Subunits NuoB, C, D, E, F, and G constitute the peripheral sector of the complex.</text>
</comment>
<comment type="subcellular location">
    <subcellularLocation>
        <location evidence="1">Cell inner membrane</location>
        <topology evidence="1">Peripheral membrane protein</topology>
        <orientation evidence="1">Cytoplasmic side</orientation>
    </subcellularLocation>
</comment>
<comment type="similarity">
    <text evidence="1">Belongs to the complex I 30 kDa subunit family.</text>
</comment>